<gene>
    <name type="primary">spn2</name>
    <name type="ORF">SPAC821.06</name>
</gene>
<accession>Q09116</accession>
<accession>Q9UT47</accession>
<feature type="chain" id="PRO_0000173504" description="Septin homolog spn2">
    <location>
        <begin position="1"/>
        <end position="331"/>
    </location>
</feature>
<feature type="domain" description="Septin-type G" evidence="2">
    <location>
        <begin position="29"/>
        <end position="301"/>
    </location>
</feature>
<feature type="region of interest" description="G1 motif" evidence="2">
    <location>
        <begin position="39"/>
        <end position="46"/>
    </location>
</feature>
<feature type="region of interest" description="G3 motif" evidence="2">
    <location>
        <begin position="96"/>
        <end position="99"/>
    </location>
</feature>
<feature type="region of interest" description="G4 motif" evidence="2">
    <location>
        <begin position="178"/>
        <end position="181"/>
    </location>
</feature>
<feature type="region of interest" description="Disordered" evidence="3">
    <location>
        <begin position="311"/>
        <end position="331"/>
    </location>
</feature>
<feature type="binding site" evidence="1">
    <location>
        <begin position="39"/>
        <end position="46"/>
    </location>
    <ligand>
        <name>GTP</name>
        <dbReference type="ChEBI" id="CHEBI:37565"/>
    </ligand>
</feature>
<feature type="binding site" evidence="1">
    <location>
        <position position="73"/>
    </location>
    <ligand>
        <name>GTP</name>
        <dbReference type="ChEBI" id="CHEBI:37565"/>
    </ligand>
</feature>
<feature type="binding site" evidence="1">
    <location>
        <position position="99"/>
    </location>
    <ligand>
        <name>GTP</name>
        <dbReference type="ChEBI" id="CHEBI:37565"/>
    </ligand>
</feature>
<feature type="binding site" evidence="1">
    <location>
        <begin position="179"/>
        <end position="187"/>
    </location>
    <ligand>
        <name>GTP</name>
        <dbReference type="ChEBI" id="CHEBI:37565"/>
    </ligand>
</feature>
<feature type="binding site" evidence="1">
    <location>
        <position position="235"/>
    </location>
    <ligand>
        <name>GTP</name>
        <dbReference type="ChEBI" id="CHEBI:37565"/>
    </ligand>
</feature>
<feature type="binding site" evidence="1">
    <location>
        <position position="250"/>
    </location>
    <ligand>
        <name>GTP</name>
        <dbReference type="ChEBI" id="CHEBI:37565"/>
    </ligand>
</feature>
<organism>
    <name type="scientific">Schizosaccharomyces pombe (strain 972 / ATCC 24843)</name>
    <name type="common">Fission yeast</name>
    <dbReference type="NCBI Taxonomy" id="284812"/>
    <lineage>
        <taxon>Eukaryota</taxon>
        <taxon>Fungi</taxon>
        <taxon>Dikarya</taxon>
        <taxon>Ascomycota</taxon>
        <taxon>Taphrinomycotina</taxon>
        <taxon>Schizosaccharomycetes</taxon>
        <taxon>Schizosaccharomycetales</taxon>
        <taxon>Schizosaccharomycetaceae</taxon>
        <taxon>Schizosaccharomyces</taxon>
    </lineage>
</organism>
<comment type="function">
    <text evidence="4 5">Plays a role in the cell cycle. Involved in a late stage of septum formation leading to the separation of the daughter cells. Involved in the correct orientation of forespore membrane extension during sporulation. Binds phosphatidylinositol 4-phosphate.</text>
</comment>
<comment type="subunit">
    <text evidence="4 5">Component of the septin complex composed of two copies of each spn1, spn2, spn3 and spn4. Component of the sporulation-specific septin complex composed of at least spn2, spn5, spn6 and spn7.</text>
</comment>
<comment type="subcellular location">
    <subcellularLocation>
        <location>Cytoplasm</location>
        <location>Cell cortex</location>
    </subcellularLocation>
    <subcellularLocation>
        <location>Forespore membrane</location>
        <topology>Peripheral membrane protein</topology>
    </subcellularLocation>
    <text>Localizes to the medial ring at the cell cortex of dividing cells. The sporulation-specific septin complex associates to the forespore membrane and forms partial or complete ring-like structures that curl around each haploid nucleus.</text>
</comment>
<comment type="similarity">
    <text evidence="2">Belongs to the TRAFAC class TrmE-Era-EngA-EngB-Septin-like GTPase superfamily. Septin GTPase family.</text>
</comment>
<dbReference type="EMBL" id="U29888">
    <property type="protein sequence ID" value="AAB53690.2"/>
    <property type="molecule type" value="mRNA"/>
</dbReference>
<dbReference type="EMBL" id="CU329670">
    <property type="protein sequence ID" value="CAB57440.1"/>
    <property type="molecule type" value="Genomic_DNA"/>
</dbReference>
<dbReference type="PIR" id="T41717">
    <property type="entry name" value="T41717"/>
</dbReference>
<dbReference type="PIR" id="T52560">
    <property type="entry name" value="T52560"/>
</dbReference>
<dbReference type="RefSeq" id="NP_593159.1">
    <property type="nucleotide sequence ID" value="NM_001018557.2"/>
</dbReference>
<dbReference type="SMR" id="Q09116"/>
<dbReference type="BioGRID" id="279931">
    <property type="interactions" value="32"/>
</dbReference>
<dbReference type="FunCoup" id="Q09116">
    <property type="interactions" value="79"/>
</dbReference>
<dbReference type="STRING" id="284812.Q09116"/>
<dbReference type="iPTMnet" id="Q09116"/>
<dbReference type="PaxDb" id="4896-SPAC821.06.1"/>
<dbReference type="EnsemblFungi" id="SPAC821.06.1">
    <property type="protein sequence ID" value="SPAC821.06.1:pep"/>
    <property type="gene ID" value="SPAC821.06"/>
</dbReference>
<dbReference type="GeneID" id="2543513"/>
<dbReference type="KEGG" id="spo:2543513"/>
<dbReference type="PomBase" id="SPAC821.06">
    <property type="gene designation" value="spn2"/>
</dbReference>
<dbReference type="VEuPathDB" id="FungiDB:SPAC821.06"/>
<dbReference type="eggNOG" id="KOG1547">
    <property type="taxonomic scope" value="Eukaryota"/>
</dbReference>
<dbReference type="HOGENOM" id="CLU_017718_7_1_1"/>
<dbReference type="InParanoid" id="Q09116"/>
<dbReference type="OMA" id="QCEFVYL"/>
<dbReference type="PhylomeDB" id="Q09116"/>
<dbReference type="PRO" id="PR:Q09116"/>
<dbReference type="Proteomes" id="UP000002485">
    <property type="component" value="Chromosome I"/>
</dbReference>
<dbReference type="GO" id="GO:0032153">
    <property type="term" value="C:cell division site"/>
    <property type="evidence" value="ECO:0000318"/>
    <property type="project" value="GO_Central"/>
</dbReference>
<dbReference type="GO" id="GO:0005829">
    <property type="term" value="C:cytosol"/>
    <property type="evidence" value="ECO:0007005"/>
    <property type="project" value="PomBase"/>
</dbReference>
<dbReference type="GO" id="GO:0032175">
    <property type="term" value="C:mating projection septin ring"/>
    <property type="evidence" value="ECO:0000314"/>
    <property type="project" value="PomBase"/>
</dbReference>
<dbReference type="GO" id="GO:0036391">
    <property type="term" value="C:medial cortex septin ring"/>
    <property type="evidence" value="ECO:0000314"/>
    <property type="project" value="PomBase"/>
</dbReference>
<dbReference type="GO" id="GO:0032152">
    <property type="term" value="C:meiotic septin complex"/>
    <property type="evidence" value="ECO:0000314"/>
    <property type="project" value="PomBase"/>
</dbReference>
<dbReference type="GO" id="GO:0016020">
    <property type="term" value="C:membrane"/>
    <property type="evidence" value="ECO:0007669"/>
    <property type="project" value="UniProtKB-KW"/>
</dbReference>
<dbReference type="GO" id="GO:0015630">
    <property type="term" value="C:microtubule cytoskeleton"/>
    <property type="evidence" value="ECO:0000318"/>
    <property type="project" value="GO_Central"/>
</dbReference>
<dbReference type="GO" id="GO:0120104">
    <property type="term" value="C:mitotic actomyosin contractile ring, proximal layer"/>
    <property type="evidence" value="ECO:0000314"/>
    <property type="project" value="PomBase"/>
</dbReference>
<dbReference type="GO" id="GO:0032151">
    <property type="term" value="C:mitotic septin complex"/>
    <property type="evidence" value="ECO:0000314"/>
    <property type="project" value="PomBase"/>
</dbReference>
<dbReference type="GO" id="GO:0005634">
    <property type="term" value="C:nucleus"/>
    <property type="evidence" value="ECO:0007005"/>
    <property type="project" value="PomBase"/>
</dbReference>
<dbReference type="GO" id="GO:0032169">
    <property type="term" value="C:prospore septin ring"/>
    <property type="evidence" value="ECO:0000314"/>
    <property type="project" value="PomBase"/>
</dbReference>
<dbReference type="GO" id="GO:0031105">
    <property type="term" value="C:septin complex"/>
    <property type="evidence" value="ECO:0000318"/>
    <property type="project" value="GO_Central"/>
</dbReference>
<dbReference type="GO" id="GO:0005940">
    <property type="term" value="C:septin ring"/>
    <property type="evidence" value="ECO:0000318"/>
    <property type="project" value="GO_Central"/>
</dbReference>
<dbReference type="GO" id="GO:0005525">
    <property type="term" value="F:GTP binding"/>
    <property type="evidence" value="ECO:0000255"/>
    <property type="project" value="PomBase"/>
</dbReference>
<dbReference type="GO" id="GO:0003924">
    <property type="term" value="F:GTPase activity"/>
    <property type="evidence" value="ECO:0000318"/>
    <property type="project" value="GO_Central"/>
</dbReference>
<dbReference type="GO" id="GO:0060090">
    <property type="term" value="F:molecular adaptor activity"/>
    <property type="evidence" value="ECO:0000318"/>
    <property type="project" value="GO_Central"/>
</dbReference>
<dbReference type="GO" id="GO:0070273">
    <property type="term" value="F:phosphatidylinositol-4-phosphate binding"/>
    <property type="evidence" value="ECO:0000314"/>
    <property type="project" value="PomBase"/>
</dbReference>
<dbReference type="GO" id="GO:0061640">
    <property type="term" value="P:cytoskeleton-dependent cytokinesis"/>
    <property type="evidence" value="ECO:0000318"/>
    <property type="project" value="GO_Central"/>
</dbReference>
<dbReference type="GO" id="GO:0000281">
    <property type="term" value="P:mitotic cytokinesis"/>
    <property type="evidence" value="ECO:0000315"/>
    <property type="project" value="PomBase"/>
</dbReference>
<dbReference type="GO" id="GO:0008104">
    <property type="term" value="P:protein localization"/>
    <property type="evidence" value="ECO:0000318"/>
    <property type="project" value="GO_Central"/>
</dbReference>
<dbReference type="GO" id="GO:0000921">
    <property type="term" value="P:septin ring assembly"/>
    <property type="evidence" value="ECO:0000315"/>
    <property type="project" value="PomBase"/>
</dbReference>
<dbReference type="GO" id="GO:0070583">
    <property type="term" value="P:spore membrane bending pathway"/>
    <property type="evidence" value="ECO:0000315"/>
    <property type="project" value="PomBase"/>
</dbReference>
<dbReference type="CDD" id="cd01850">
    <property type="entry name" value="CDC_Septin"/>
    <property type="match status" value="1"/>
</dbReference>
<dbReference type="FunFam" id="3.40.50.300:FF:000260">
    <property type="entry name" value="Cell division control 10"/>
    <property type="match status" value="1"/>
</dbReference>
<dbReference type="Gene3D" id="3.40.50.300">
    <property type="entry name" value="P-loop containing nucleotide triphosphate hydrolases"/>
    <property type="match status" value="1"/>
</dbReference>
<dbReference type="InterPro" id="IPR030379">
    <property type="entry name" value="G_SEPTIN_dom"/>
</dbReference>
<dbReference type="InterPro" id="IPR027417">
    <property type="entry name" value="P-loop_NTPase"/>
</dbReference>
<dbReference type="InterPro" id="IPR016491">
    <property type="entry name" value="Septin"/>
</dbReference>
<dbReference type="PANTHER" id="PTHR18884">
    <property type="entry name" value="SEPTIN"/>
    <property type="match status" value="1"/>
</dbReference>
<dbReference type="Pfam" id="PF00735">
    <property type="entry name" value="Septin"/>
    <property type="match status" value="1"/>
</dbReference>
<dbReference type="PIRSF" id="PIRSF006698">
    <property type="entry name" value="Septin"/>
    <property type="match status" value="1"/>
</dbReference>
<dbReference type="SUPFAM" id="SSF52540">
    <property type="entry name" value="P-loop containing nucleoside triphosphate hydrolases"/>
    <property type="match status" value="1"/>
</dbReference>
<dbReference type="PROSITE" id="PS51719">
    <property type="entry name" value="G_SEPTIN"/>
    <property type="match status" value="1"/>
</dbReference>
<sequence length="331" mass="38129">MEVPSAVTLNNYVGFDSITSQINRKLIRRGFQFNVMVVGPSGSGKSTLINTLFSAHLMDSKGRLDYQAPYRQTTEIHVTSQVVRENRVQLQLNLIDTPGYGDQINNDKCWEPIIKYIRDQHSSYLRRELNSHREKRLQDTRVHCCLFFIRPTGHSLRPIDIAVLKRLTEVVNVVPVIAKSDSLTLEERAAFKQQIREEFVKHDINLYPYDSDDADEEEINLNAAVRNLIPFAVVGSEKAIIVDGRPIRGRQNRWGVVNVDDENHCEFVFLRNFLMRTHLQDLIETTSYYHYEKFRFKQLSSLKEQSSLATRMGSPAPVYPSEPHLHTATAQ</sequence>
<keyword id="KW-0131">Cell cycle</keyword>
<keyword id="KW-0132">Cell division</keyword>
<keyword id="KW-0963">Cytoplasm</keyword>
<keyword id="KW-0342">GTP-binding</keyword>
<keyword id="KW-0446">Lipid-binding</keyword>
<keyword id="KW-0472">Membrane</keyword>
<keyword id="KW-0498">Mitosis</keyword>
<keyword id="KW-0547">Nucleotide-binding</keyword>
<keyword id="KW-1185">Reference proteome</keyword>
<proteinExistence type="evidence at protein level"/>
<name>SPN2_SCHPO</name>
<reference key="1">
    <citation type="journal article" date="1996" name="Curr. Opin. Cell Biol.">
        <title>The septins: roles in cytokinesis and other processes.</title>
        <authorList>
            <person name="Longtine M.S."/>
            <person name="DeMarini D.J."/>
            <person name="Valencik M.L."/>
            <person name="Al-Awar O.S."/>
            <person name="Fares H."/>
            <person name="De Virgilio C."/>
            <person name="Pringle J.R."/>
        </authorList>
    </citation>
    <scope>NUCLEOTIDE SEQUENCE [MRNA]</scope>
</reference>
<reference key="2">
    <citation type="submission" date="2001-09" db="EMBL/GenBank/DDBJ databases">
        <authorList>
            <person name="Al-Awar O.S."/>
        </authorList>
    </citation>
    <scope>SEQUENCE REVISION</scope>
</reference>
<reference key="3">
    <citation type="journal article" date="2002" name="Nature">
        <title>The genome sequence of Schizosaccharomyces pombe.</title>
        <authorList>
            <person name="Wood V."/>
            <person name="Gwilliam R."/>
            <person name="Rajandream M.A."/>
            <person name="Lyne M.H."/>
            <person name="Lyne R."/>
            <person name="Stewart A."/>
            <person name="Sgouros J.G."/>
            <person name="Peat N."/>
            <person name="Hayles J."/>
            <person name="Baker S.G."/>
            <person name="Basham D."/>
            <person name="Bowman S."/>
            <person name="Brooks K."/>
            <person name="Brown D."/>
            <person name="Brown S."/>
            <person name="Chillingworth T."/>
            <person name="Churcher C.M."/>
            <person name="Collins M."/>
            <person name="Connor R."/>
            <person name="Cronin A."/>
            <person name="Davis P."/>
            <person name="Feltwell T."/>
            <person name="Fraser A."/>
            <person name="Gentles S."/>
            <person name="Goble A."/>
            <person name="Hamlin N."/>
            <person name="Harris D.E."/>
            <person name="Hidalgo J."/>
            <person name="Hodgson G."/>
            <person name="Holroyd S."/>
            <person name="Hornsby T."/>
            <person name="Howarth S."/>
            <person name="Huckle E.J."/>
            <person name="Hunt S."/>
            <person name="Jagels K."/>
            <person name="James K.D."/>
            <person name="Jones L."/>
            <person name="Jones M."/>
            <person name="Leather S."/>
            <person name="McDonald S."/>
            <person name="McLean J."/>
            <person name="Mooney P."/>
            <person name="Moule S."/>
            <person name="Mungall K.L."/>
            <person name="Murphy L.D."/>
            <person name="Niblett D."/>
            <person name="Odell C."/>
            <person name="Oliver K."/>
            <person name="O'Neil S."/>
            <person name="Pearson D."/>
            <person name="Quail M.A."/>
            <person name="Rabbinowitsch E."/>
            <person name="Rutherford K.M."/>
            <person name="Rutter S."/>
            <person name="Saunders D."/>
            <person name="Seeger K."/>
            <person name="Sharp S."/>
            <person name="Skelton J."/>
            <person name="Simmonds M.N."/>
            <person name="Squares R."/>
            <person name="Squares S."/>
            <person name="Stevens K."/>
            <person name="Taylor K."/>
            <person name="Taylor R.G."/>
            <person name="Tivey A."/>
            <person name="Walsh S.V."/>
            <person name="Warren T."/>
            <person name="Whitehead S."/>
            <person name="Woodward J.R."/>
            <person name="Volckaert G."/>
            <person name="Aert R."/>
            <person name="Robben J."/>
            <person name="Grymonprez B."/>
            <person name="Weltjens I."/>
            <person name="Vanstreels E."/>
            <person name="Rieger M."/>
            <person name="Schaefer M."/>
            <person name="Mueller-Auer S."/>
            <person name="Gabel C."/>
            <person name="Fuchs M."/>
            <person name="Duesterhoeft A."/>
            <person name="Fritzc C."/>
            <person name="Holzer E."/>
            <person name="Moestl D."/>
            <person name="Hilbert H."/>
            <person name="Borzym K."/>
            <person name="Langer I."/>
            <person name="Beck A."/>
            <person name="Lehrach H."/>
            <person name="Reinhardt R."/>
            <person name="Pohl T.M."/>
            <person name="Eger P."/>
            <person name="Zimmermann W."/>
            <person name="Wedler H."/>
            <person name="Wambutt R."/>
            <person name="Purnelle B."/>
            <person name="Goffeau A."/>
            <person name="Cadieu E."/>
            <person name="Dreano S."/>
            <person name="Gloux S."/>
            <person name="Lelaure V."/>
            <person name="Mottier S."/>
            <person name="Galibert F."/>
            <person name="Aves S.J."/>
            <person name="Xiang Z."/>
            <person name="Hunt C."/>
            <person name="Moore K."/>
            <person name="Hurst S.M."/>
            <person name="Lucas M."/>
            <person name="Rochet M."/>
            <person name="Gaillardin C."/>
            <person name="Tallada V.A."/>
            <person name="Garzon A."/>
            <person name="Thode G."/>
            <person name="Daga R.R."/>
            <person name="Cruzado L."/>
            <person name="Jimenez J."/>
            <person name="Sanchez M."/>
            <person name="del Rey F."/>
            <person name="Benito J."/>
            <person name="Dominguez A."/>
            <person name="Revuelta J.L."/>
            <person name="Moreno S."/>
            <person name="Armstrong J."/>
            <person name="Forsburg S.L."/>
            <person name="Cerutti L."/>
            <person name="Lowe T."/>
            <person name="McCombie W.R."/>
            <person name="Paulsen I."/>
            <person name="Potashkin J."/>
            <person name="Shpakovski G.V."/>
            <person name="Ussery D."/>
            <person name="Barrell B.G."/>
            <person name="Nurse P."/>
        </authorList>
    </citation>
    <scope>NUCLEOTIDE SEQUENCE [LARGE SCALE GENOMIC DNA]</scope>
    <source>
        <strain>972 / ATCC 24843</strain>
    </source>
</reference>
<reference key="4">
    <citation type="journal article" date="2004" name="Mol. Biol. Cell">
        <title>Requirements of fission yeast septins for complex formation, localization, and function.</title>
        <authorList>
            <person name="An H."/>
            <person name="Morrell J.L."/>
            <person name="Jennings J.L."/>
            <person name="Link A.J."/>
            <person name="Gould K.L."/>
        </authorList>
    </citation>
    <scope>FUNCTION</scope>
    <scope>SUBCELLULAR LOCATION</scope>
    <scope>IDENTIFICATION IN THE SEPTIN COMPLEX</scope>
    <scope>IDENTIFICATION BY MASS SPECTROMETRY</scope>
</reference>
<reference key="5">
    <citation type="journal article" date="2010" name="Mol. Cell. Biol.">
        <title>Role of septins in the orientation of forespore membrane extension during sporulation in fission yeast.</title>
        <authorList>
            <person name="Onishi M."/>
            <person name="Koga T."/>
            <person name="Hirata A."/>
            <person name="Nakamura T."/>
            <person name="Asakawa H."/>
            <person name="Shimoda C."/>
            <person name="Bahler J."/>
            <person name="Wu J.Q."/>
            <person name="Takegawa K."/>
            <person name="Tachikawa H."/>
            <person name="Pringle J.R."/>
            <person name="Fukui Y."/>
        </authorList>
    </citation>
    <scope>FUNCTION</scope>
    <scope>SUBCELLULAR LOCATION</scope>
    <scope>IDENTIFICATION IN THE SPORULATION-SPECIFIC SEPTIN COMPLEX</scope>
    <scope>PHOSPHATIDYLINOSITOL 4-PHOSPHATE-BINDING</scope>
</reference>
<evidence type="ECO:0000250" key="1"/>
<evidence type="ECO:0000255" key="2">
    <source>
        <dbReference type="PROSITE-ProRule" id="PRU01056"/>
    </source>
</evidence>
<evidence type="ECO:0000256" key="3">
    <source>
        <dbReference type="SAM" id="MobiDB-lite"/>
    </source>
</evidence>
<evidence type="ECO:0000269" key="4">
    <source>
    </source>
</evidence>
<evidence type="ECO:0000269" key="5">
    <source>
    </source>
</evidence>
<protein>
    <recommendedName>
        <fullName>Septin homolog spn2</fullName>
    </recommendedName>
</protein>